<organism>
    <name type="scientific">Salmonella typhimurium (strain LT2 / SGSC1412 / ATCC 700720)</name>
    <dbReference type="NCBI Taxonomy" id="99287"/>
    <lineage>
        <taxon>Bacteria</taxon>
        <taxon>Pseudomonadati</taxon>
        <taxon>Pseudomonadota</taxon>
        <taxon>Gammaproteobacteria</taxon>
        <taxon>Enterobacterales</taxon>
        <taxon>Enterobacteriaceae</taxon>
        <taxon>Salmonella</taxon>
    </lineage>
</organism>
<gene>
    <name type="primary">yiiZ</name>
    <name type="ordered locus">STM4054</name>
</gene>
<accession>P43020</accession>
<sequence length="327" mass="36954">MKQPGFIRLATLALLSTLSFFSHGETILRLAYAENSQPVKDALHFLGQQVEEKTGGDIKVQYFPDGQLGGERELVELTQVGVVDITKVSSGLMESFSPEYGVFSLPYLFATVEEYYRVMDNPQVMEPVYQSTAAQGFIGVGWYDSGARNFYMSKAPIKRIEDLRGKKIRVMQSETAIQTLKLLGASPIAMSQAEVYTSLQQGILDGAENNEFALTIARHGEVARYYTYDMHTRIPDILLMSTLTLEKLTPEQQRIVEAAIKASIEFEKAAWDKEIEKTRLAAVKDFNVEFYEIDKKPFQEAVQPIYDGLKNKPRLYGLYQRIQTAKN</sequence>
<dbReference type="EMBL" id="AE006468">
    <property type="protein sequence ID" value="AAL22894.1"/>
    <property type="molecule type" value="Genomic_DNA"/>
</dbReference>
<dbReference type="EMBL" id="U20645">
    <property type="status" value="NOT_ANNOTATED_CDS"/>
    <property type="molecule type" value="Genomic_DNA"/>
</dbReference>
<dbReference type="RefSeq" id="NP_462935.1">
    <property type="nucleotide sequence ID" value="NC_003197.2"/>
</dbReference>
<dbReference type="RefSeq" id="WP_000812819.1">
    <property type="nucleotide sequence ID" value="NC_003197.2"/>
</dbReference>
<dbReference type="SMR" id="P43020"/>
<dbReference type="STRING" id="99287.STM4054"/>
<dbReference type="TCDB" id="2.A.56.1.5">
    <property type="family name" value="the tripartite atp-independent periplasmic transporter (trap-t) family"/>
</dbReference>
<dbReference type="PaxDb" id="99287-STM4054"/>
<dbReference type="GeneID" id="1255581"/>
<dbReference type="KEGG" id="stm:STM4054"/>
<dbReference type="PATRIC" id="fig|99287.12.peg.4274"/>
<dbReference type="HOGENOM" id="CLU_036176_4_0_6"/>
<dbReference type="OMA" id="NKGHPQV"/>
<dbReference type="PhylomeDB" id="P43020"/>
<dbReference type="BioCyc" id="SENT99287:STM4054-MONOMER"/>
<dbReference type="Proteomes" id="UP000001014">
    <property type="component" value="Chromosome"/>
</dbReference>
<dbReference type="GO" id="GO:0030288">
    <property type="term" value="C:outer membrane-bounded periplasmic space"/>
    <property type="evidence" value="ECO:0007669"/>
    <property type="project" value="InterPro"/>
</dbReference>
<dbReference type="GO" id="GO:0030246">
    <property type="term" value="F:carbohydrate binding"/>
    <property type="evidence" value="ECO:0000318"/>
    <property type="project" value="GO_Central"/>
</dbReference>
<dbReference type="GO" id="GO:0055085">
    <property type="term" value="P:transmembrane transport"/>
    <property type="evidence" value="ECO:0007669"/>
    <property type="project" value="InterPro"/>
</dbReference>
<dbReference type="CDD" id="cd13671">
    <property type="entry name" value="PBP2_TRAP_SBP_like_3"/>
    <property type="match status" value="1"/>
</dbReference>
<dbReference type="FunFam" id="3.40.190.170:FF:000001">
    <property type="entry name" value="TRAP dicarboxylate transporter, DctP subunit"/>
    <property type="match status" value="1"/>
</dbReference>
<dbReference type="Gene3D" id="3.40.190.170">
    <property type="entry name" value="Bacterial extracellular solute-binding protein, family 7"/>
    <property type="match status" value="1"/>
</dbReference>
<dbReference type="InterPro" id="IPR018389">
    <property type="entry name" value="DctP_fam"/>
</dbReference>
<dbReference type="InterPro" id="IPR004682">
    <property type="entry name" value="TRAP_DctP"/>
</dbReference>
<dbReference type="InterPro" id="IPR038404">
    <property type="entry name" value="TRAP_DctP_sf"/>
</dbReference>
<dbReference type="NCBIfam" id="TIGR00787">
    <property type="entry name" value="dctP"/>
    <property type="match status" value="1"/>
</dbReference>
<dbReference type="NCBIfam" id="NF037995">
    <property type="entry name" value="TRAP_S1"/>
    <property type="match status" value="1"/>
</dbReference>
<dbReference type="PANTHER" id="PTHR33376">
    <property type="match status" value="1"/>
</dbReference>
<dbReference type="PANTHER" id="PTHR33376:SF2">
    <property type="entry name" value="DICARBOXYLATE-BINDING PERIPLASMIC PROTEIN"/>
    <property type="match status" value="1"/>
</dbReference>
<dbReference type="Pfam" id="PF03480">
    <property type="entry name" value="DctP"/>
    <property type="match status" value="1"/>
</dbReference>
<dbReference type="PIRSF" id="PIRSF006470">
    <property type="entry name" value="DctB"/>
    <property type="match status" value="1"/>
</dbReference>
<dbReference type="SUPFAM" id="SSF53850">
    <property type="entry name" value="Periplasmic binding protein-like II"/>
    <property type="match status" value="1"/>
</dbReference>
<reference key="1">
    <citation type="journal article" date="2001" name="Nature">
        <title>Complete genome sequence of Salmonella enterica serovar Typhimurium LT2.</title>
        <authorList>
            <person name="McClelland M."/>
            <person name="Sanderson K.E."/>
            <person name="Spieth J."/>
            <person name="Clifton S.W."/>
            <person name="Latreille P."/>
            <person name="Courtney L."/>
            <person name="Porwollik S."/>
            <person name="Ali J."/>
            <person name="Dante M."/>
            <person name="Du F."/>
            <person name="Hou S."/>
            <person name="Layman D."/>
            <person name="Leonard S."/>
            <person name="Nguyen C."/>
            <person name="Scott K."/>
            <person name="Holmes A."/>
            <person name="Grewal N."/>
            <person name="Mulvaney E."/>
            <person name="Ryan E."/>
            <person name="Sun H."/>
            <person name="Florea L."/>
            <person name="Miller W."/>
            <person name="Stoneking T."/>
            <person name="Nhan M."/>
            <person name="Waterston R."/>
            <person name="Wilson R.K."/>
        </authorList>
    </citation>
    <scope>NUCLEOTIDE SEQUENCE [LARGE SCALE GENOMIC DNA]</scope>
    <source>
        <strain>LT2 / SGSC1412 / ATCC 700720</strain>
    </source>
</reference>
<reference key="2">
    <citation type="journal article" date="1995" name="Infect. Immun.">
        <title>Role of Salmonella typhimurium Mn-superoxide dismutase (SodA) in protection against early killing by J774 macrophages.</title>
        <authorList>
            <person name="Tsolis R.M."/>
            <person name="Baumler A.J."/>
            <person name="Heffron F."/>
        </authorList>
    </citation>
    <scope>NUCLEOTIDE SEQUENCE [GENOMIC DNA] OF 1-56</scope>
    <source>
        <strain>ATCC 14028 / SGSG 2980 / CDC 6516-60 / NCTC 12023</strain>
    </source>
</reference>
<reference key="3">
    <citation type="unpublished observations" date="1995-05">
        <authorList>
            <person name="Rudd K.E."/>
        </authorList>
    </citation>
    <scope>IDENTIFICATION</scope>
</reference>
<feature type="signal peptide" evidence="1">
    <location>
        <begin position="1"/>
        <end position="24"/>
    </location>
</feature>
<feature type="chain" id="PRO_0000014233" description="Uncharacterized protein YiiZ">
    <location>
        <begin position="25"/>
        <end position="327"/>
    </location>
</feature>
<keyword id="KW-1185">Reference proteome</keyword>
<keyword id="KW-0732">Signal</keyword>
<proteinExistence type="inferred from homology"/>
<protein>
    <recommendedName>
        <fullName>Uncharacterized protein YiiZ</fullName>
    </recommendedName>
</protein>
<name>YIIZ_SALTY</name>
<evidence type="ECO:0000255" key="1"/>